<gene>
    <name type="primary">CXCL5</name>
    <name type="synonym">ENA78</name>
    <name type="synonym">SCYB5</name>
</gene>
<reference key="1">
    <citation type="journal article" date="1994" name="Gene">
        <title>Cloning of a full-length cDNA encoding the neutrophil-activating peptide ENA-78 from human platelets.</title>
        <authorList>
            <person name="Power C.A."/>
            <person name="Furness R.B."/>
            <person name="Brawand C."/>
            <person name="Wells T.N.C."/>
        </authorList>
    </citation>
    <scope>NUCLEOTIDE SEQUENCE [MRNA]</scope>
</reference>
<reference key="2">
    <citation type="journal article" date="1994" name="J. Biol. Chem.">
        <title>Cloning and characterization of the human neutrophil-activating peptide (ENA-78) gene.</title>
        <authorList>
            <person name="Chang M.S."/>
            <person name="McNinch J."/>
            <person name="Basu R."/>
            <person name="Simonet S."/>
        </authorList>
    </citation>
    <scope>NUCLEOTIDE SEQUENCE [GENOMIC DNA]</scope>
</reference>
<reference key="3">
    <citation type="journal article" date="1994" name="Biochem. Biophys. Res. Commun.">
        <title>Characterization of the gene for human neutrophil-activating peptide 78 (ENA-78).</title>
        <authorList>
            <person name="Corbett M.S."/>
            <person name="Schmitt I."/>
            <person name="Riess O."/>
            <person name="Walz A."/>
        </authorList>
    </citation>
    <scope>NUCLEOTIDE SEQUENCE [GENOMIC DNA]</scope>
</reference>
<reference key="4">
    <citation type="journal article" date="2001" name="Blood">
        <title>Localization of distal regulatory domains in the megakaryocyte-specific platelet basic protein/platelet factor 4 gene locus.</title>
        <authorList>
            <person name="Zhang C."/>
            <person name="Thornton M.A."/>
            <person name="Kowalska M.A."/>
            <person name="Sachis B.S."/>
            <person name="Feldman M."/>
            <person name="Poncz M."/>
            <person name="McKenzie S.E."/>
            <person name="Reilly M.P."/>
        </authorList>
    </citation>
    <scope>NUCLEOTIDE SEQUENCE [GENOMIC DNA]</scope>
</reference>
<reference key="5">
    <citation type="journal article" date="2004" name="Genome Res.">
        <title>The status, quality, and expansion of the NIH full-length cDNA project: the Mammalian Gene Collection (MGC).</title>
        <authorList>
            <consortium name="The MGC Project Team"/>
        </authorList>
    </citation>
    <scope>NUCLEOTIDE SEQUENCE [LARGE SCALE MRNA]</scope>
    <source>
        <tissue>Kidney</tissue>
    </source>
</reference>
<reference key="6">
    <citation type="submission" date="2001-06" db="EMBL/GenBank/DDBJ databases">
        <title>Novel polymorphism in ENA-78 gene.</title>
        <authorList>
            <person name="Amoli M.M."/>
            <person name="Thomson W."/>
            <person name="Hajeer A.H."/>
            <person name="Gonzalez-Gay M.A."/>
            <person name="Ollier W.E.R."/>
        </authorList>
    </citation>
    <scope>NUCLEOTIDE SEQUENCE [GENOMIC DNA] OF 38-80</scope>
</reference>
<reference key="7">
    <citation type="journal article" date="1991" name="J. Exp. Med.">
        <title>Structure and neutrophil-activating properties of a novel inflammatory peptide (ENA-78) with homology to interleukin 8.</title>
        <authorList>
            <person name="Walz A."/>
            <person name="Burgener R."/>
            <person name="Car B."/>
            <person name="Baggiolini M."/>
            <person name="Kunkel S.L."/>
            <person name="Strieter R.M."/>
        </authorList>
    </citation>
    <scope>NUCLEOTIDE SEQUENCE [MRNA] OF 43-114</scope>
    <source>
        <tissue>Epithelium</tissue>
    </source>
</reference>
<reference key="8">
    <citation type="journal article" date="1999" name="Eur. J. Biochem.">
        <title>Isolation of the CXC chemokines ENA-78, GRO alpha and GRO gamma from tumor cells and leukocytes reveals NH2-terminal heterogeneity. Functional comparison of different natural isoforms.</title>
        <authorList>
            <person name="Wuyts A."/>
            <person name="Govaerts C."/>
            <person name="Struyf S."/>
            <person name="Lenaerts J.-P."/>
            <person name="Put W."/>
            <person name="Conings R."/>
            <person name="Proost P."/>
            <person name="Van Damme J."/>
        </authorList>
    </citation>
    <scope>PROTEIN SEQUENCE OF 37-51</scope>
    <scope>IDENTIFICATION OF ENA-78(8-78) AND ENA-78(9-78)</scope>
    <scope>PROTEOLYTIC PROCESSING OF N-TERMINUS</scope>
    <scope>FUNCTION</scope>
    <source>
        <tissue>Peripheral blood monocyte</tissue>
    </source>
</reference>
<reference key="9">
    <citation type="journal article" date="2003" name="Nat. Biotechnol.">
        <title>Exploring proteomes and analyzing protein processing by mass spectrometric identification of sorted N-terminal peptides.</title>
        <authorList>
            <person name="Gevaert K."/>
            <person name="Goethals M."/>
            <person name="Martens L."/>
            <person name="Van Damme J."/>
            <person name="Staes A."/>
            <person name="Thomas G.R."/>
            <person name="Vandekerckhove J."/>
        </authorList>
    </citation>
    <scope>PROTEIN SEQUENCE OF 37-45</scope>
    <source>
        <tissue>Platelet</tissue>
    </source>
</reference>
<reference key="10">
    <citation type="journal article" date="2003" name="Adv. Immunol.">
        <title>Regulation of the immune response by the interaction of chemokines and proteases.</title>
        <authorList>
            <person name="Struyf S."/>
            <person name="Proost P."/>
            <person name="Van Damme J."/>
        </authorList>
    </citation>
    <scope>REVIEW</scope>
</reference>
<reference evidence="5" key="11">
    <citation type="journal article" date="2014" name="PLoS ONE">
        <title>Solution structure of CXCL5--a novel chemokine and adipokine implicated in inflammation and obesity.</title>
        <authorList>
            <person name="Sepuru K.M."/>
            <person name="Poluri K.M."/>
            <person name="Rajarathnam K."/>
        </authorList>
    </citation>
    <scope>STRUCTURE BY NMR OF 37-114</scope>
    <scope>DISULFIDE BONDS</scope>
    <scope>SUBUNIT</scope>
</reference>
<dbReference type="EMBL" id="X78686">
    <property type="protein sequence ID" value="CAA55355.1"/>
    <property type="molecule type" value="mRNA"/>
</dbReference>
<dbReference type="EMBL" id="U12709">
    <property type="protein sequence ID" value="AAA62475.1"/>
    <property type="molecule type" value="Genomic_DNA"/>
</dbReference>
<dbReference type="EMBL" id="L37036">
    <property type="protein sequence ID" value="AAA86426.1"/>
    <property type="molecule type" value="Genomic_DNA"/>
</dbReference>
<dbReference type="EMBL" id="AF349466">
    <property type="protein sequence ID" value="AAK29641.1"/>
    <property type="molecule type" value="Genomic_DNA"/>
</dbReference>
<dbReference type="EMBL" id="BC008376">
    <property type="protein sequence ID" value="AAH08376.1"/>
    <property type="molecule type" value="mRNA"/>
</dbReference>
<dbReference type="EMBL" id="AJ315732">
    <property type="protein sequence ID" value="CAC42884.1"/>
    <property type="molecule type" value="Genomic_DNA"/>
</dbReference>
<dbReference type="CCDS" id="CCDS34006.1"/>
<dbReference type="PIR" id="JC2433">
    <property type="entry name" value="A55010"/>
</dbReference>
<dbReference type="RefSeq" id="NP_002985.1">
    <property type="nucleotide sequence ID" value="NM_002994.5"/>
</dbReference>
<dbReference type="PDB" id="2MGS">
    <property type="method" value="NMR"/>
    <property type="chains" value="A/B=37-114"/>
</dbReference>
<dbReference type="PDB" id="8XWS">
    <property type="method" value="EM"/>
    <property type="resolution" value="3.06 A"/>
    <property type="chains" value="B/D=37-114"/>
</dbReference>
<dbReference type="PDB" id="8XX7">
    <property type="method" value="EM"/>
    <property type="resolution" value="3.32 A"/>
    <property type="chains" value="B/D=37-114"/>
</dbReference>
<dbReference type="PDBsum" id="2MGS"/>
<dbReference type="PDBsum" id="8XWS"/>
<dbReference type="PDBsum" id="8XX7"/>
<dbReference type="BMRB" id="P42830"/>
<dbReference type="EMDB" id="EMD-38742"/>
<dbReference type="EMDB" id="EMD-38748"/>
<dbReference type="SMR" id="P42830"/>
<dbReference type="BioGRID" id="112276">
    <property type="interactions" value="50"/>
</dbReference>
<dbReference type="DIP" id="DIP-5911N"/>
<dbReference type="FunCoup" id="P42830">
    <property type="interactions" value="1003"/>
</dbReference>
<dbReference type="IntAct" id="P42830">
    <property type="interactions" value="22"/>
</dbReference>
<dbReference type="STRING" id="9606.ENSP00000296027"/>
<dbReference type="iPTMnet" id="P42830"/>
<dbReference type="PhosphoSitePlus" id="P42830"/>
<dbReference type="BioMuta" id="CXCL5"/>
<dbReference type="DMDM" id="1169525"/>
<dbReference type="jPOST" id="P42830"/>
<dbReference type="MassIVE" id="P42830"/>
<dbReference type="PaxDb" id="9606-ENSP00000296027"/>
<dbReference type="PeptideAtlas" id="P42830"/>
<dbReference type="ProteomicsDB" id="55559"/>
<dbReference type="ABCD" id="P42830">
    <property type="antibodies" value="2 sequenced antibodies"/>
</dbReference>
<dbReference type="Antibodypedia" id="13336">
    <property type="antibodies" value="550 antibodies from 36 providers"/>
</dbReference>
<dbReference type="DNASU" id="6374"/>
<dbReference type="Ensembl" id="ENST00000296027.5">
    <property type="protein sequence ID" value="ENSP00000296027.4"/>
    <property type="gene ID" value="ENSG00000163735.7"/>
</dbReference>
<dbReference type="GeneID" id="6374"/>
<dbReference type="KEGG" id="hsa:6374"/>
<dbReference type="MANE-Select" id="ENST00000296027.5">
    <property type="protein sequence ID" value="ENSP00000296027.4"/>
    <property type="RefSeq nucleotide sequence ID" value="NM_002994.5"/>
    <property type="RefSeq protein sequence ID" value="NP_002985.1"/>
</dbReference>
<dbReference type="AGR" id="HGNC:10642"/>
<dbReference type="CTD" id="6374"/>
<dbReference type="DisGeNET" id="6374"/>
<dbReference type="GeneCards" id="CXCL5"/>
<dbReference type="HGNC" id="HGNC:10642">
    <property type="gene designation" value="CXCL5"/>
</dbReference>
<dbReference type="HPA" id="ENSG00000163735">
    <property type="expression patterns" value="Group enriched (lymphoid tissue, salivary gland)"/>
</dbReference>
<dbReference type="MIM" id="600324">
    <property type="type" value="gene"/>
</dbReference>
<dbReference type="neXtProt" id="NX_P42830"/>
<dbReference type="OpenTargets" id="ENSG00000163735"/>
<dbReference type="PharmGKB" id="PA35573"/>
<dbReference type="VEuPathDB" id="HostDB:ENSG00000163735"/>
<dbReference type="eggNOG" id="ENOG502S7MM">
    <property type="taxonomic scope" value="Eukaryota"/>
</dbReference>
<dbReference type="GeneTree" id="ENSGT00940000163567"/>
<dbReference type="HOGENOM" id="CLU_143902_1_0_1"/>
<dbReference type="InParanoid" id="P42830"/>
<dbReference type="OMA" id="HPKMISN"/>
<dbReference type="OrthoDB" id="8872899at2759"/>
<dbReference type="PAN-GO" id="P42830">
    <property type="GO annotations" value="8 GO annotations based on evolutionary models"/>
</dbReference>
<dbReference type="PhylomeDB" id="P42830"/>
<dbReference type="TreeFam" id="TF333433"/>
<dbReference type="PathwayCommons" id="P42830"/>
<dbReference type="Reactome" id="R-HSA-380108">
    <property type="pathway name" value="Chemokine receptors bind chemokines"/>
</dbReference>
<dbReference type="Reactome" id="R-HSA-418594">
    <property type="pathway name" value="G alpha (i) signalling events"/>
</dbReference>
<dbReference type="SignaLink" id="P42830"/>
<dbReference type="SIGNOR" id="P42830"/>
<dbReference type="BioGRID-ORCS" id="6374">
    <property type="hits" value="15 hits in 1117 CRISPR screens"/>
</dbReference>
<dbReference type="EvolutionaryTrace" id="P42830"/>
<dbReference type="GeneWiki" id="CXCL5"/>
<dbReference type="GenomeRNAi" id="6374"/>
<dbReference type="Pharos" id="P42830">
    <property type="development level" value="Tbio"/>
</dbReference>
<dbReference type="PRO" id="PR:P42830"/>
<dbReference type="Proteomes" id="UP000005640">
    <property type="component" value="Chromosome 4"/>
</dbReference>
<dbReference type="RNAct" id="P42830">
    <property type="molecule type" value="protein"/>
</dbReference>
<dbReference type="Bgee" id="ENSG00000163735">
    <property type="expression patterns" value="Expressed in monocyte and 123 other cell types or tissues"/>
</dbReference>
<dbReference type="ExpressionAtlas" id="P42830">
    <property type="expression patterns" value="baseline and differential"/>
</dbReference>
<dbReference type="GO" id="GO:0005576">
    <property type="term" value="C:extracellular region"/>
    <property type="evidence" value="ECO:0000304"/>
    <property type="project" value="Reactome"/>
</dbReference>
<dbReference type="GO" id="GO:0005615">
    <property type="term" value="C:extracellular space"/>
    <property type="evidence" value="ECO:0000318"/>
    <property type="project" value="GO_Central"/>
</dbReference>
<dbReference type="GO" id="GO:0008009">
    <property type="term" value="F:chemokine activity"/>
    <property type="evidence" value="ECO:0000318"/>
    <property type="project" value="GO_Central"/>
</dbReference>
<dbReference type="GO" id="GO:0045236">
    <property type="term" value="F:CXCR chemokine receptor binding"/>
    <property type="evidence" value="ECO:0000318"/>
    <property type="project" value="GO_Central"/>
</dbReference>
<dbReference type="GO" id="GO:0042802">
    <property type="term" value="F:identical protein binding"/>
    <property type="evidence" value="ECO:0000314"/>
    <property type="project" value="UniProtKB"/>
</dbReference>
<dbReference type="GO" id="GO:0061844">
    <property type="term" value="P:antimicrobial humoral immune response mediated by antimicrobial peptide"/>
    <property type="evidence" value="ECO:0000318"/>
    <property type="project" value="GO_Central"/>
</dbReference>
<dbReference type="GO" id="GO:0007267">
    <property type="term" value="P:cell-cell signaling"/>
    <property type="evidence" value="ECO:0000304"/>
    <property type="project" value="ProtInc"/>
</dbReference>
<dbReference type="GO" id="GO:0071222">
    <property type="term" value="P:cellular response to lipopolysaccharide"/>
    <property type="evidence" value="ECO:0000318"/>
    <property type="project" value="GO_Central"/>
</dbReference>
<dbReference type="GO" id="GO:0006935">
    <property type="term" value="P:chemotaxis"/>
    <property type="evidence" value="ECO:0000304"/>
    <property type="project" value="ProtInc"/>
</dbReference>
<dbReference type="GO" id="GO:0006954">
    <property type="term" value="P:inflammatory response"/>
    <property type="evidence" value="ECO:0000318"/>
    <property type="project" value="GO_Central"/>
</dbReference>
<dbReference type="GO" id="GO:0030593">
    <property type="term" value="P:neutrophil chemotaxis"/>
    <property type="evidence" value="ECO:0000318"/>
    <property type="project" value="GO_Central"/>
</dbReference>
<dbReference type="GO" id="GO:0008284">
    <property type="term" value="P:positive regulation of cell population proliferation"/>
    <property type="evidence" value="ECO:0000304"/>
    <property type="project" value="ProtInc"/>
</dbReference>
<dbReference type="GO" id="GO:0007165">
    <property type="term" value="P:signal transduction"/>
    <property type="evidence" value="ECO:0000304"/>
    <property type="project" value="ProtInc"/>
</dbReference>
<dbReference type="CDD" id="cd00273">
    <property type="entry name" value="Chemokine_CXC"/>
    <property type="match status" value="1"/>
</dbReference>
<dbReference type="FunFam" id="2.40.50.40:FF:000004">
    <property type="entry name" value="C-X-C motif chemokine"/>
    <property type="match status" value="1"/>
</dbReference>
<dbReference type="Gene3D" id="2.40.50.40">
    <property type="match status" value="1"/>
</dbReference>
<dbReference type="InterPro" id="IPR039809">
    <property type="entry name" value="Chemokine_b/g/d"/>
</dbReference>
<dbReference type="InterPro" id="IPR001089">
    <property type="entry name" value="Chemokine_CXC"/>
</dbReference>
<dbReference type="InterPro" id="IPR018048">
    <property type="entry name" value="Chemokine_CXC_CS"/>
</dbReference>
<dbReference type="InterPro" id="IPR001811">
    <property type="entry name" value="Chemokine_IL8-like_dom"/>
</dbReference>
<dbReference type="InterPro" id="IPR033899">
    <property type="entry name" value="CXC_Chemokine_domain"/>
</dbReference>
<dbReference type="InterPro" id="IPR036048">
    <property type="entry name" value="Interleukin_8-like_sf"/>
</dbReference>
<dbReference type="PANTHER" id="PTHR12015:SF197">
    <property type="entry name" value="C-X-C MOTIF CHEMOKINE 5"/>
    <property type="match status" value="1"/>
</dbReference>
<dbReference type="PANTHER" id="PTHR12015">
    <property type="entry name" value="SMALL INDUCIBLE CYTOKINE A"/>
    <property type="match status" value="1"/>
</dbReference>
<dbReference type="Pfam" id="PF00048">
    <property type="entry name" value="IL8"/>
    <property type="match status" value="1"/>
</dbReference>
<dbReference type="PRINTS" id="PR00436">
    <property type="entry name" value="INTERLEUKIN8"/>
</dbReference>
<dbReference type="PRINTS" id="PR00437">
    <property type="entry name" value="SMALLCYTKCXC"/>
</dbReference>
<dbReference type="SMART" id="SM00199">
    <property type="entry name" value="SCY"/>
    <property type="match status" value="1"/>
</dbReference>
<dbReference type="SUPFAM" id="SSF54117">
    <property type="entry name" value="Interleukin 8-like chemokines"/>
    <property type="match status" value="1"/>
</dbReference>
<dbReference type="PROSITE" id="PS00471">
    <property type="entry name" value="SMALL_CYTOKINES_CXC"/>
    <property type="match status" value="1"/>
</dbReference>
<feature type="signal peptide" evidence="1 2">
    <location>
        <begin position="1"/>
        <end position="36"/>
    </location>
</feature>
<feature type="chain" id="PRO_0000005075" description="C-X-C motif chemokine 5">
    <location>
        <begin position="37"/>
        <end position="114"/>
    </location>
</feature>
<feature type="chain" id="PRO_0000005076" description="ENA-78(8-78)">
    <location>
        <begin position="44"/>
        <end position="114"/>
    </location>
</feature>
<feature type="chain" id="PRO_0000005077" description="ENA-78(9-78)">
    <location>
        <begin position="45"/>
        <end position="114"/>
    </location>
</feature>
<feature type="site" description="Cleavage; by cathepsin G">
    <location>
        <begin position="44"/>
        <end position="45"/>
    </location>
</feature>
<feature type="disulfide bond" evidence="3 5">
    <location>
        <begin position="49"/>
        <end position="75"/>
    </location>
</feature>
<feature type="disulfide bond" evidence="3 5">
    <location>
        <begin position="51"/>
        <end position="91"/>
    </location>
</feature>
<feature type="helix" evidence="6">
    <location>
        <begin position="60"/>
        <end position="62"/>
    </location>
</feature>
<feature type="strand" evidence="6">
    <location>
        <begin position="63"/>
        <end position="69"/>
    </location>
</feature>
<feature type="strand" evidence="6">
    <location>
        <begin position="79"/>
        <end position="87"/>
    </location>
</feature>
<feature type="strand" evidence="6">
    <location>
        <begin position="89"/>
        <end position="92"/>
    </location>
</feature>
<feature type="helix" evidence="6">
    <location>
        <begin position="97"/>
        <end position="108"/>
    </location>
</feature>
<feature type="turn" evidence="6">
    <location>
        <begin position="109"/>
        <end position="112"/>
    </location>
</feature>
<evidence type="ECO:0000269" key="1">
    <source>
    </source>
</evidence>
<evidence type="ECO:0000269" key="2">
    <source>
    </source>
</evidence>
<evidence type="ECO:0000269" key="3">
    <source>
    </source>
</evidence>
<evidence type="ECO:0000305" key="4"/>
<evidence type="ECO:0007744" key="5">
    <source>
        <dbReference type="PDB" id="2MGS"/>
    </source>
</evidence>
<evidence type="ECO:0007829" key="6">
    <source>
        <dbReference type="PDB" id="2MGS"/>
    </source>
</evidence>
<proteinExistence type="evidence at protein level"/>
<sequence length="114" mass="11972">MSLLSSRAARVPGPSSSLCALLVLLLLLTQPGPIASAGPAAAVLRELRCVCLQTTQGVHPKMISNLQVFAIGPQCSKVEVVASLKNGKEICLDPEAPFLKKVIQKILDGGNKEN</sequence>
<accession>P42830</accession>
<accession>Q96QE1</accession>
<keyword id="KW-0002">3D-structure</keyword>
<keyword id="KW-0202">Cytokine</keyword>
<keyword id="KW-0903">Direct protein sequencing</keyword>
<keyword id="KW-1015">Disulfide bond</keyword>
<keyword id="KW-1267">Proteomics identification</keyword>
<keyword id="KW-1185">Reference proteome</keyword>
<keyword id="KW-0964">Secreted</keyword>
<keyword id="KW-0732">Signal</keyword>
<comment type="function">
    <text evidence="1">Involved in neutrophil activation. In vitro, ENA-78(8-78) and ENA-78(9-78) show a threefold higher chemotactic activity for neutrophil granulocytes.</text>
</comment>
<comment type="subunit">
    <text evidence="3">Monomer (PubMed:24695525). Homodimer (PubMed:24695525).</text>
</comment>
<comment type="interaction">
    <interactant intactId="EBI-12175919">
        <id>P42830</id>
    </interactant>
    <interactant intactId="EBI-2880652">
        <id>Q08043</id>
        <label>ACTN3</label>
    </interactant>
    <organismsDiffer>false</organismsDiffer>
    <experiments>3</experiments>
</comment>
<comment type="interaction">
    <interactant intactId="EBI-12175919">
        <id>P42830</id>
    </interactant>
    <interactant intactId="EBI-1211484">
        <id>P05187</id>
        <label>ALPP</label>
    </interactant>
    <organismsDiffer>false</organismsDiffer>
    <experiments>3</experiments>
</comment>
<comment type="interaction">
    <interactant intactId="EBI-12175919">
        <id>P42830</id>
    </interactant>
    <interactant intactId="EBI-743414">
        <id>O95967</id>
        <label>EFEMP2</label>
    </interactant>
    <organismsDiffer>false</organismsDiffer>
    <experiments>3</experiments>
</comment>
<comment type="interaction">
    <interactant intactId="EBI-12175919">
        <id>P42830</id>
    </interactant>
    <interactant intactId="EBI-11956479">
        <id>P23142-4</id>
        <label>FBLN1</label>
    </interactant>
    <organismsDiffer>false</organismsDiffer>
    <experiments>3</experiments>
</comment>
<comment type="interaction">
    <interactant intactId="EBI-12175919">
        <id>P42830</id>
    </interactant>
    <interactant intactId="EBI-747754">
        <id>P28799</id>
        <label>GRN</label>
    </interactant>
    <organismsDiffer>false</organismsDiffer>
    <experiments>3</experiments>
</comment>
<comment type="interaction">
    <interactant intactId="EBI-12175919">
        <id>P42830</id>
    </interactant>
    <interactant intactId="EBI-16439278">
        <id>Q6FHY5</id>
        <label>MEOX2</label>
    </interactant>
    <organismsDiffer>false</organismsDiffer>
    <experiments>3</experiments>
</comment>
<comment type="interaction">
    <interactant intactId="EBI-12175919">
        <id>P42830</id>
    </interactant>
    <interactant intactId="EBI-11747707">
        <id>B2RUY7</id>
        <label>VWC2L</label>
    </interactant>
    <organismsDiffer>false</organismsDiffer>
    <experiments>3</experiments>
</comment>
<comment type="subcellular location">
    <subcellularLocation>
        <location>Secreted</location>
    </subcellularLocation>
</comment>
<comment type="PTM">
    <text evidence="1">N-terminal processed forms ENA-78(8-78) and ENA-78(9-78) are produced by proteolytic cleavage after secretion from peripheral blood monocytes.</text>
</comment>
<comment type="similarity">
    <text evidence="4">Belongs to the intercrine alpha (chemokine CxC) family.</text>
</comment>
<comment type="online information" name="Wikipedia">
    <link uri="https://en.wikipedia.org/wiki/CXCL5"/>
    <text>CXCL5 entry</text>
</comment>
<name>CXCL5_HUMAN</name>
<organism>
    <name type="scientific">Homo sapiens</name>
    <name type="common">Human</name>
    <dbReference type="NCBI Taxonomy" id="9606"/>
    <lineage>
        <taxon>Eukaryota</taxon>
        <taxon>Metazoa</taxon>
        <taxon>Chordata</taxon>
        <taxon>Craniata</taxon>
        <taxon>Vertebrata</taxon>
        <taxon>Euteleostomi</taxon>
        <taxon>Mammalia</taxon>
        <taxon>Eutheria</taxon>
        <taxon>Euarchontoglires</taxon>
        <taxon>Primates</taxon>
        <taxon>Haplorrhini</taxon>
        <taxon>Catarrhini</taxon>
        <taxon>Hominidae</taxon>
        <taxon>Homo</taxon>
    </lineage>
</organism>
<protein>
    <recommendedName>
        <fullName>C-X-C motif chemokine 5</fullName>
    </recommendedName>
    <alternativeName>
        <fullName>ENA-78(1-78)</fullName>
    </alternativeName>
    <alternativeName>
        <fullName>Epithelial-derived neutrophil-activating protein 78</fullName>
    </alternativeName>
    <alternativeName>
        <fullName>Neutrophil-activating peptide ENA-78</fullName>
    </alternativeName>
    <alternativeName>
        <fullName>Small-inducible cytokine B5</fullName>
    </alternativeName>
    <component>
        <recommendedName>
            <fullName>ENA-78(8-78)</fullName>
        </recommendedName>
    </component>
    <component>
        <recommendedName>
            <fullName>ENA-78(9-78)</fullName>
        </recommendedName>
    </component>
</protein>